<protein>
    <recommendedName>
        <fullName evidence="1">Tryptophan synthase beta chain</fullName>
        <ecNumber evidence="1">4.2.1.20</ecNumber>
    </recommendedName>
</protein>
<comment type="function">
    <text evidence="1">The beta subunit is responsible for the synthesis of L-tryptophan from indole and L-serine.</text>
</comment>
<comment type="catalytic activity">
    <reaction evidence="1">
        <text>(1S,2R)-1-C-(indol-3-yl)glycerol 3-phosphate + L-serine = D-glyceraldehyde 3-phosphate + L-tryptophan + H2O</text>
        <dbReference type="Rhea" id="RHEA:10532"/>
        <dbReference type="ChEBI" id="CHEBI:15377"/>
        <dbReference type="ChEBI" id="CHEBI:33384"/>
        <dbReference type="ChEBI" id="CHEBI:57912"/>
        <dbReference type="ChEBI" id="CHEBI:58866"/>
        <dbReference type="ChEBI" id="CHEBI:59776"/>
        <dbReference type="EC" id="4.2.1.20"/>
    </reaction>
</comment>
<comment type="cofactor">
    <cofactor evidence="1">
        <name>pyridoxal 5'-phosphate</name>
        <dbReference type="ChEBI" id="CHEBI:597326"/>
    </cofactor>
</comment>
<comment type="pathway">
    <text evidence="1">Amino-acid biosynthesis; L-tryptophan biosynthesis; L-tryptophan from chorismate: step 5/5.</text>
</comment>
<comment type="subunit">
    <text evidence="1">Tetramer of two alpha and two beta chains.</text>
</comment>
<comment type="similarity">
    <text evidence="1">Belongs to the TrpB family.</text>
</comment>
<evidence type="ECO:0000255" key="1">
    <source>
        <dbReference type="HAMAP-Rule" id="MF_00133"/>
    </source>
</evidence>
<keyword id="KW-0028">Amino-acid biosynthesis</keyword>
<keyword id="KW-0057">Aromatic amino acid biosynthesis</keyword>
<keyword id="KW-0456">Lyase</keyword>
<keyword id="KW-0663">Pyridoxal phosphate</keyword>
<keyword id="KW-0822">Tryptophan biosynthesis</keyword>
<reference key="1">
    <citation type="submission" date="2008-01" db="EMBL/GenBank/DDBJ databases">
        <title>Complete sequence of Pseudomonas putida GB-1.</title>
        <authorList>
            <consortium name="US DOE Joint Genome Institute"/>
            <person name="Copeland A."/>
            <person name="Lucas S."/>
            <person name="Lapidus A."/>
            <person name="Barry K."/>
            <person name="Glavina del Rio T."/>
            <person name="Dalin E."/>
            <person name="Tice H."/>
            <person name="Pitluck S."/>
            <person name="Bruce D."/>
            <person name="Goodwin L."/>
            <person name="Chertkov O."/>
            <person name="Brettin T."/>
            <person name="Detter J.C."/>
            <person name="Han C."/>
            <person name="Kuske C.R."/>
            <person name="Schmutz J."/>
            <person name="Larimer F."/>
            <person name="Land M."/>
            <person name="Hauser L."/>
            <person name="Kyrpides N."/>
            <person name="Kim E."/>
            <person name="McCarthy J.K."/>
            <person name="Richardson P."/>
        </authorList>
    </citation>
    <scope>NUCLEOTIDE SEQUENCE [LARGE SCALE GENOMIC DNA]</scope>
    <source>
        <strain>GB-1</strain>
    </source>
</reference>
<sequence>MTQSQYRPGPDANGLFGSFGGRYVAETLMPLVLDLAREYEAAKADPKFLEELAYFQRDYIGRPNPLYFAERLTEHCGGAKIFFKREELNHTGAHKVNNCIGQVLLAKRMGKKRLIAETGAGMHGVATATVAARFGLPCVIYMGATDIERQQANVFRMKLLGAEIVPVTAGTGTLKDAMNEALRDWVTNVEDTFYLIGTVAGPHPYPAMVRDFQSIIGKETRAQLQEKEGRLPDSLVACVGGGSNAMGLFHEFLEEPSVQIIGVEAGGHGVHTDKHAASLNGGVPGVLHGNRTYLLQDADGQITDAHSISAGLDYPGIGPEHAYLHEVKRVEYVSITDDEALDAFHATCRLEGIIPALESSHALAEAIKRAPKLPKDHLMVVCLSGRGDKDMQTVMNHMAAQEKQA</sequence>
<proteinExistence type="inferred from homology"/>
<accession>B0KFW3</accession>
<feature type="chain" id="PRO_1000076401" description="Tryptophan synthase beta chain">
    <location>
        <begin position="1"/>
        <end position="405"/>
    </location>
</feature>
<feature type="modified residue" description="N6-(pyridoxal phosphate)lysine" evidence="1">
    <location>
        <position position="95"/>
    </location>
</feature>
<gene>
    <name evidence="1" type="primary">trpB</name>
    <name type="ordered locus">PputGB1_0098</name>
</gene>
<name>TRPB_PSEPG</name>
<organism>
    <name type="scientific">Pseudomonas putida (strain GB-1)</name>
    <dbReference type="NCBI Taxonomy" id="76869"/>
    <lineage>
        <taxon>Bacteria</taxon>
        <taxon>Pseudomonadati</taxon>
        <taxon>Pseudomonadota</taxon>
        <taxon>Gammaproteobacteria</taxon>
        <taxon>Pseudomonadales</taxon>
        <taxon>Pseudomonadaceae</taxon>
        <taxon>Pseudomonas</taxon>
    </lineage>
</organism>
<dbReference type="EC" id="4.2.1.20" evidence="1"/>
<dbReference type="EMBL" id="CP000926">
    <property type="protein sequence ID" value="ABY96014.1"/>
    <property type="molecule type" value="Genomic_DNA"/>
</dbReference>
<dbReference type="RefSeq" id="WP_012269890.1">
    <property type="nucleotide sequence ID" value="NC_010322.1"/>
</dbReference>
<dbReference type="SMR" id="B0KFW3"/>
<dbReference type="KEGG" id="ppg:PputGB1_0098"/>
<dbReference type="eggNOG" id="COG0133">
    <property type="taxonomic scope" value="Bacteria"/>
</dbReference>
<dbReference type="HOGENOM" id="CLU_016734_3_1_6"/>
<dbReference type="UniPathway" id="UPA00035">
    <property type="reaction ID" value="UER00044"/>
</dbReference>
<dbReference type="Proteomes" id="UP000002157">
    <property type="component" value="Chromosome"/>
</dbReference>
<dbReference type="GO" id="GO:0005737">
    <property type="term" value="C:cytoplasm"/>
    <property type="evidence" value="ECO:0007669"/>
    <property type="project" value="TreeGrafter"/>
</dbReference>
<dbReference type="GO" id="GO:0004834">
    <property type="term" value="F:tryptophan synthase activity"/>
    <property type="evidence" value="ECO:0007669"/>
    <property type="project" value="UniProtKB-UniRule"/>
</dbReference>
<dbReference type="CDD" id="cd06446">
    <property type="entry name" value="Trp-synth_B"/>
    <property type="match status" value="1"/>
</dbReference>
<dbReference type="FunFam" id="3.40.50.1100:FF:000001">
    <property type="entry name" value="Tryptophan synthase beta chain"/>
    <property type="match status" value="1"/>
</dbReference>
<dbReference type="FunFam" id="3.40.50.1100:FF:000004">
    <property type="entry name" value="Tryptophan synthase beta chain"/>
    <property type="match status" value="1"/>
</dbReference>
<dbReference type="Gene3D" id="3.40.50.1100">
    <property type="match status" value="2"/>
</dbReference>
<dbReference type="HAMAP" id="MF_00133">
    <property type="entry name" value="Trp_synth_beta"/>
    <property type="match status" value="1"/>
</dbReference>
<dbReference type="InterPro" id="IPR006653">
    <property type="entry name" value="Trp_synth_b_CS"/>
</dbReference>
<dbReference type="InterPro" id="IPR006654">
    <property type="entry name" value="Trp_synth_beta"/>
</dbReference>
<dbReference type="InterPro" id="IPR023026">
    <property type="entry name" value="Trp_synth_beta/beta-like"/>
</dbReference>
<dbReference type="InterPro" id="IPR001926">
    <property type="entry name" value="TrpB-like_PALP"/>
</dbReference>
<dbReference type="InterPro" id="IPR036052">
    <property type="entry name" value="TrpB-like_PALP_sf"/>
</dbReference>
<dbReference type="NCBIfam" id="TIGR00263">
    <property type="entry name" value="trpB"/>
    <property type="match status" value="1"/>
</dbReference>
<dbReference type="PANTHER" id="PTHR48077:SF3">
    <property type="entry name" value="TRYPTOPHAN SYNTHASE"/>
    <property type="match status" value="1"/>
</dbReference>
<dbReference type="PANTHER" id="PTHR48077">
    <property type="entry name" value="TRYPTOPHAN SYNTHASE-RELATED"/>
    <property type="match status" value="1"/>
</dbReference>
<dbReference type="Pfam" id="PF00291">
    <property type="entry name" value="PALP"/>
    <property type="match status" value="1"/>
</dbReference>
<dbReference type="PIRSF" id="PIRSF001413">
    <property type="entry name" value="Trp_syn_beta"/>
    <property type="match status" value="1"/>
</dbReference>
<dbReference type="SUPFAM" id="SSF53686">
    <property type="entry name" value="Tryptophan synthase beta subunit-like PLP-dependent enzymes"/>
    <property type="match status" value="1"/>
</dbReference>
<dbReference type="PROSITE" id="PS00168">
    <property type="entry name" value="TRP_SYNTHASE_BETA"/>
    <property type="match status" value="1"/>
</dbReference>